<evidence type="ECO:0000250" key="1"/>
<evidence type="ECO:0000250" key="2">
    <source>
        <dbReference type="UniProtKB" id="P11388"/>
    </source>
</evidence>
<evidence type="ECO:0000255" key="3">
    <source>
        <dbReference type="PROSITE-ProRule" id="PRU00995"/>
    </source>
</evidence>
<evidence type="ECO:0000255" key="4">
    <source>
        <dbReference type="PROSITE-ProRule" id="PRU01384"/>
    </source>
</evidence>
<evidence type="ECO:0000256" key="5">
    <source>
        <dbReference type="SAM" id="MobiDB-lite"/>
    </source>
</evidence>
<evidence type="ECO:0000305" key="6"/>
<reference key="1">
    <citation type="submission" date="1997-07" db="EMBL/GenBank/DDBJ databases">
        <title>Cloning of topoisomerase II from the silkworm Bombyx mori.</title>
        <authorList>
            <person name="Larsen J.J."/>
        </authorList>
    </citation>
    <scope>NUCLEOTIDE SEQUENCE [MRNA]</scope>
    <source>
        <tissue>Testis</tissue>
    </source>
</reference>
<keyword id="KW-0067">ATP-binding</keyword>
<keyword id="KW-0238">DNA-binding</keyword>
<keyword id="KW-0413">Isomerase</keyword>
<keyword id="KW-0460">Magnesium</keyword>
<keyword id="KW-0479">Metal-binding</keyword>
<keyword id="KW-0547">Nucleotide-binding</keyword>
<keyword id="KW-0539">Nucleus</keyword>
<keyword id="KW-1185">Reference proteome</keyword>
<keyword id="KW-0799">Topoisomerase</keyword>
<sequence length="1547" mass="176184">MADIKSMFNKMSSPKQNGTGEPAPAKGQKGAIEKIYQKKSQLEHILLRPDTYIGSVERATETMWVYDKVKECMMQKELTSVPDCSFPGLYKIYDEILVNAADNKQRDPKMDVIKIDINQETNTISVYNNGSGIPVVMHKDEKMYVPTMIFGHLLTSSNYNDEEEKVTGGRNGYGAKLCNIFSTKFTVETASKQYKKHFKQTWGSNMTKASEPKIKDSGKDDDFTKIVFSPDLAKFKMEKLEDDIVLLMSRRAYDVAASSQGVKVYLNGERLKINKFKDYVDLYIKGKDDENGQPLKVVYEKVSDRWEVALTISDMGFQQVSFVNSIATTKGGKHVDTVADSVVKNVLEVLKKKNKGGVNIKPYQVKTHMWLFVNCLIVNPTFDSQTKENMTLQAKSFGSKCNLSEKFITAVTKCGLVESVLTWAKFKAQDQLVKASGKKQSKLKGIPKLEDANDAGTKNAHLCTLILTEGDSAKTLAVSGLSVVGRDHYGVFPLEGKPLNVRDASHKQVLENVEINNLIKILGLQYKKKYNSVDDLKTLRYGKVMIMADQDQDGSHIKGLIINFIHHNWPELLKLPFLEEFITPIVKATKKDKEISFYSLPEFEEWKKETENHHTYNIKYYKGLGTSTSKEAKEYFQNMDRHRIRFKYSGPTDDHHIELAFSKKGADQRKEWLTNHMDEVKRRKEIGLSERYLYTKETKTVTYSDFVNLELVLFSNGDNVRSIPSMIDGLKPGQRKVIFTCIKRNDKREVKVAQLAGSVAEHSAYHHGEQSLAMTIVNLAQNYVGSNNINLLEPRGQFGTRLSGGKDSASPRYIFTLMSPLTRLIFHPHDDPLLVHEFEDNQKIEPVYYLPIIPMVLVNGVEGIGTGWSTKIPNYNPRDIAENLRRLLDGEKPKVMHPWYKNFKGNVEGFGDKYVISGEAAILPGDKIEITELPVGTWTHNYKENVLEPMLGTDKVKPLISEYREYNTDTTVRFVVSLLPGKLSEIEAEGIHKVFKLQTTISMTCMNAFDYNCCLEKYDKVEEILREFYDLRVKYYVRRKDYLEGQLQAEADKLSNQARFILKKCDKGLVIENKKRKAMVEELIKRGYAPDPIADWKKRASKIQGLTALEDDDAQESEEEEPEPDPKGKPVDPDKAFQQLKEVKKFNYLLGMSMWMLTKEKKDELLKQRDQKLTELTTLKNKTAPMLWREDLDAFLIKLDEVEDKERREELNVNKKTSKAMAGKKNRKSMFDIIPSENGRRVEPKISDDLIKRIQAAEKAKTRKEIKKEYDPDDPTGISPSSGEKKPKARVKKEKPEKAEKPDKVDKAEKTDGLKQTKLTFKKEPKKKKMTFSGSSSGEMSASDAEVEVLVPRERTNARRAATRVQKYKDGSDDSGSDSEPELLDNKIDSDHEAPQTLSISDEDDDFNIKKNPAKKPAEMDSDCLFDSLIEDAKKDEPQKTLTKSKSESILIRRLNIERQRRCDTSVPPKEKAAPKRKLMNVDKDEKKTKKRPARVMLDQDSDDEDSIFDSKKGKKKTAANPKKKAKKKVESDSESDFNISDSSLSD</sequence>
<name>TOP2_BOMMO</name>
<comment type="function">
    <text>Control of topological states of DNA by transient breakage and subsequent rejoining of DNA strands. Topoisomerase II makes double-strand breaks.</text>
</comment>
<comment type="catalytic activity">
    <reaction evidence="3">
        <text>ATP-dependent breakage, passage and rejoining of double-stranded DNA.</text>
        <dbReference type="EC" id="5.6.2.2"/>
    </reaction>
</comment>
<comment type="cofactor">
    <cofactor evidence="3">
        <name>Mg(2+)</name>
        <dbReference type="ChEBI" id="CHEBI:18420"/>
    </cofactor>
    <cofactor evidence="3">
        <name>Mn(2+)</name>
        <dbReference type="ChEBI" id="CHEBI:29035"/>
    </cofactor>
    <cofactor evidence="3">
        <name>Ca(2+)</name>
        <dbReference type="ChEBI" id="CHEBI:29108"/>
    </cofactor>
    <text evidence="3">Binds two Mg(2+) per subunit. The magnesium ions form salt bridges with both the protein and the DNA. Can also accept other divalent metal cations, such as Mn(2+) or Ca(2+).</text>
</comment>
<comment type="subunit">
    <text evidence="1">Homodimer.</text>
</comment>
<comment type="subcellular location">
    <subcellularLocation>
        <location evidence="1">Nucleus</location>
    </subcellularLocation>
</comment>
<comment type="miscellaneous">
    <text>Eukaryotic topoisomerase I and II can relax both negative and positive supercoils, whereas prokaryotic enzymes relax only negative supercoils.</text>
</comment>
<comment type="similarity">
    <text evidence="6">Belongs to the type II topoisomerase family.</text>
</comment>
<proteinExistence type="evidence at transcript level"/>
<feature type="chain" id="PRO_0000145373" description="DNA topoisomerase 2">
    <location>
        <begin position="1"/>
        <end position="1547"/>
    </location>
</feature>
<feature type="domain" description="Toprim" evidence="3">
    <location>
        <begin position="463"/>
        <end position="580"/>
    </location>
</feature>
<feature type="domain" description="Topo IIA-type catalytic" evidence="4">
    <location>
        <begin position="723"/>
        <end position="1192"/>
    </location>
</feature>
<feature type="region of interest" description="Disordered" evidence="5">
    <location>
        <begin position="8"/>
        <end position="30"/>
    </location>
</feature>
<feature type="region of interest" description="Interaction with DNA" evidence="2">
    <location>
        <begin position="351"/>
        <end position="353"/>
    </location>
</feature>
<feature type="region of interest" description="Interaction with DNA" evidence="2">
    <location>
        <begin position="996"/>
        <end position="1005"/>
    </location>
</feature>
<feature type="region of interest" description="Disordered" evidence="5">
    <location>
        <begin position="1107"/>
        <end position="1134"/>
    </location>
</feature>
<feature type="region of interest" description="Disordered" evidence="5">
    <location>
        <begin position="1209"/>
        <end position="1249"/>
    </location>
</feature>
<feature type="region of interest" description="Disordered" evidence="5">
    <location>
        <begin position="1261"/>
        <end position="1423"/>
    </location>
</feature>
<feature type="region of interest" description="Disordered" evidence="5">
    <location>
        <begin position="1459"/>
        <end position="1547"/>
    </location>
</feature>
<feature type="compositionally biased region" description="Polar residues" evidence="5">
    <location>
        <begin position="9"/>
        <end position="19"/>
    </location>
</feature>
<feature type="compositionally biased region" description="Acidic residues" evidence="5">
    <location>
        <begin position="1109"/>
        <end position="1123"/>
    </location>
</feature>
<feature type="compositionally biased region" description="Basic and acidic residues" evidence="5">
    <location>
        <begin position="1124"/>
        <end position="1134"/>
    </location>
</feature>
<feature type="compositionally biased region" description="Basic residues" evidence="5">
    <location>
        <begin position="1216"/>
        <end position="1228"/>
    </location>
</feature>
<feature type="compositionally biased region" description="Basic and acidic residues" evidence="5">
    <location>
        <begin position="1238"/>
        <end position="1249"/>
    </location>
</feature>
<feature type="compositionally biased region" description="Basic and acidic residues" evidence="5">
    <location>
        <begin position="1294"/>
        <end position="1315"/>
    </location>
</feature>
<feature type="compositionally biased region" description="Low complexity" evidence="5">
    <location>
        <begin position="1331"/>
        <end position="1344"/>
    </location>
</feature>
<feature type="compositionally biased region" description="Acidic residues" evidence="5">
    <location>
        <begin position="1373"/>
        <end position="1383"/>
    </location>
</feature>
<feature type="compositionally biased region" description="Basic and acidic residues" evidence="5">
    <location>
        <begin position="1384"/>
        <end position="1394"/>
    </location>
</feature>
<feature type="compositionally biased region" description="Basic and acidic residues" evidence="5">
    <location>
        <begin position="1459"/>
        <end position="1488"/>
    </location>
</feature>
<feature type="compositionally biased region" description="Basic residues" evidence="5">
    <location>
        <begin position="1513"/>
        <end position="1528"/>
    </location>
</feature>
<feature type="compositionally biased region" description="Polar residues" evidence="5">
    <location>
        <begin position="1537"/>
        <end position="1547"/>
    </location>
</feature>
<feature type="active site" description="O-(5'-phospho-DNA)-tyrosine intermediate" evidence="4">
    <location>
        <position position="813"/>
    </location>
</feature>
<feature type="binding site" evidence="2">
    <location>
        <position position="99"/>
    </location>
    <ligand>
        <name>ATP</name>
        <dbReference type="ChEBI" id="CHEBI:30616"/>
    </ligand>
</feature>
<feature type="binding site" evidence="2">
    <location>
        <position position="128"/>
    </location>
    <ligand>
        <name>ATP</name>
        <dbReference type="ChEBI" id="CHEBI:30616"/>
    </ligand>
</feature>
<feature type="binding site" evidence="2">
    <location>
        <begin position="156"/>
        <end position="158"/>
    </location>
    <ligand>
        <name>ATP</name>
        <dbReference type="ChEBI" id="CHEBI:30616"/>
    </ligand>
</feature>
<feature type="binding site" evidence="2">
    <location>
        <begin position="169"/>
        <end position="176"/>
    </location>
    <ligand>
        <name>ATP</name>
        <dbReference type="ChEBI" id="CHEBI:30616"/>
    </ligand>
</feature>
<feature type="binding site" evidence="2">
    <location>
        <begin position="385"/>
        <end position="387"/>
    </location>
    <ligand>
        <name>ATP</name>
        <dbReference type="ChEBI" id="CHEBI:30616"/>
    </ligand>
</feature>
<feature type="binding site" evidence="3">
    <location>
        <position position="469"/>
    </location>
    <ligand>
        <name>Mg(2+)</name>
        <dbReference type="ChEBI" id="CHEBI:18420"/>
        <label>1</label>
        <note>catalytic</note>
    </ligand>
</feature>
<feature type="binding site" evidence="3">
    <location>
        <position position="549"/>
    </location>
    <ligand>
        <name>Mg(2+)</name>
        <dbReference type="ChEBI" id="CHEBI:18420"/>
        <label>1</label>
        <note>catalytic</note>
    </ligand>
</feature>
<feature type="binding site" evidence="3">
    <location>
        <position position="549"/>
    </location>
    <ligand>
        <name>Mg(2+)</name>
        <dbReference type="ChEBI" id="CHEBI:18420"/>
        <label>2</label>
    </ligand>
</feature>
<feature type="binding site" evidence="3">
    <location>
        <position position="551"/>
    </location>
    <ligand>
        <name>Mg(2+)</name>
        <dbReference type="ChEBI" id="CHEBI:18420"/>
        <label>2</label>
    </ligand>
</feature>
<feature type="site" description="Interaction with DNA" evidence="3">
    <location>
        <position position="497"/>
    </location>
</feature>
<feature type="site" description="Interaction with DNA" evidence="3">
    <location>
        <position position="500"/>
    </location>
</feature>
<feature type="site" description="Interaction with DNA" evidence="3">
    <location>
        <position position="669"/>
    </location>
</feature>
<feature type="site" description="Interaction with DNA" evidence="3">
    <location>
        <position position="670"/>
    </location>
</feature>
<feature type="site" description="Interaction with DNA" evidence="3">
    <location>
        <position position="731"/>
    </location>
</feature>
<feature type="site" description="Interaction with DNA" evidence="3">
    <location>
        <position position="765"/>
    </location>
</feature>
<feature type="site" description="Interaction with DNA" evidence="3">
    <location>
        <position position="771"/>
    </location>
</feature>
<feature type="site" description="Transition state stabilizer" evidence="1">
    <location>
        <position position="812"/>
    </location>
</feature>
<feature type="site" description="Important for DNA bending; intercalates between base pairs of target DNA" evidence="1">
    <location>
        <position position="864"/>
    </location>
</feature>
<feature type="site" description="Interaction with DNA" evidence="2">
    <location>
        <position position="938"/>
    </location>
</feature>
<accession>O16140</accession>
<organism>
    <name type="scientific">Bombyx mori</name>
    <name type="common">Silk moth</name>
    <dbReference type="NCBI Taxonomy" id="7091"/>
    <lineage>
        <taxon>Eukaryota</taxon>
        <taxon>Metazoa</taxon>
        <taxon>Ecdysozoa</taxon>
        <taxon>Arthropoda</taxon>
        <taxon>Hexapoda</taxon>
        <taxon>Insecta</taxon>
        <taxon>Pterygota</taxon>
        <taxon>Neoptera</taxon>
        <taxon>Endopterygota</taxon>
        <taxon>Lepidoptera</taxon>
        <taxon>Glossata</taxon>
        <taxon>Ditrysia</taxon>
        <taxon>Bombycoidea</taxon>
        <taxon>Bombycidae</taxon>
        <taxon>Bombycinae</taxon>
        <taxon>Bombyx</taxon>
    </lineage>
</organism>
<dbReference type="EC" id="5.6.2.2" evidence="3"/>
<dbReference type="EMBL" id="AF013277">
    <property type="protein sequence ID" value="AAB67168.1"/>
    <property type="molecule type" value="mRNA"/>
</dbReference>
<dbReference type="RefSeq" id="NP_001037009.1">
    <property type="nucleotide sequence ID" value="NM_001043544.1"/>
</dbReference>
<dbReference type="SMR" id="O16140"/>
<dbReference type="FunCoup" id="O16140">
    <property type="interactions" value="1291"/>
</dbReference>
<dbReference type="STRING" id="7091.O16140"/>
<dbReference type="PaxDb" id="7091-BGIBMGA011615-TA"/>
<dbReference type="EnsemblMetazoa" id="NM_001043544.1">
    <property type="protein sequence ID" value="NP_001037009.1"/>
    <property type="gene ID" value="GeneID_692558"/>
</dbReference>
<dbReference type="GeneID" id="692558"/>
<dbReference type="KEGG" id="bmor:692558"/>
<dbReference type="CTD" id="35225"/>
<dbReference type="eggNOG" id="KOG0355">
    <property type="taxonomic scope" value="Eukaryota"/>
</dbReference>
<dbReference type="HOGENOM" id="CLU_001935_1_0_1"/>
<dbReference type="InParanoid" id="O16140"/>
<dbReference type="Proteomes" id="UP000005204">
    <property type="component" value="Unassembled WGS sequence"/>
</dbReference>
<dbReference type="GO" id="GO:0005634">
    <property type="term" value="C:nucleus"/>
    <property type="evidence" value="ECO:0007669"/>
    <property type="project" value="UniProtKB-SubCell"/>
</dbReference>
<dbReference type="GO" id="GO:0005524">
    <property type="term" value="F:ATP binding"/>
    <property type="evidence" value="ECO:0007669"/>
    <property type="project" value="UniProtKB-KW"/>
</dbReference>
<dbReference type="GO" id="GO:0003677">
    <property type="term" value="F:DNA binding"/>
    <property type="evidence" value="ECO:0007669"/>
    <property type="project" value="UniProtKB-KW"/>
</dbReference>
<dbReference type="GO" id="GO:0003918">
    <property type="term" value="F:DNA topoisomerase type II (double strand cut, ATP-hydrolyzing) activity"/>
    <property type="evidence" value="ECO:0007669"/>
    <property type="project" value="UniProtKB-EC"/>
</dbReference>
<dbReference type="GO" id="GO:0046872">
    <property type="term" value="F:metal ion binding"/>
    <property type="evidence" value="ECO:0007669"/>
    <property type="project" value="UniProtKB-KW"/>
</dbReference>
<dbReference type="GO" id="GO:0006265">
    <property type="term" value="P:DNA topological change"/>
    <property type="evidence" value="ECO:0007669"/>
    <property type="project" value="InterPro"/>
</dbReference>
<dbReference type="GO" id="GO:0000712">
    <property type="term" value="P:resolution of meiotic recombination intermediates"/>
    <property type="evidence" value="ECO:0007669"/>
    <property type="project" value="TreeGrafter"/>
</dbReference>
<dbReference type="GO" id="GO:0000819">
    <property type="term" value="P:sister chromatid segregation"/>
    <property type="evidence" value="ECO:0007669"/>
    <property type="project" value="TreeGrafter"/>
</dbReference>
<dbReference type="CDD" id="cd16930">
    <property type="entry name" value="HATPase_TopII-like"/>
    <property type="match status" value="1"/>
</dbReference>
<dbReference type="CDD" id="cd00187">
    <property type="entry name" value="TOP4c"/>
    <property type="match status" value="1"/>
</dbReference>
<dbReference type="CDD" id="cd03481">
    <property type="entry name" value="TopoIIA_Trans_ScTopoIIA"/>
    <property type="match status" value="1"/>
</dbReference>
<dbReference type="CDD" id="cd03365">
    <property type="entry name" value="TOPRIM_TopoIIA"/>
    <property type="match status" value="1"/>
</dbReference>
<dbReference type="FunFam" id="1.10.268.10:FF:000002">
    <property type="entry name" value="DNA topoisomerase 2"/>
    <property type="match status" value="1"/>
</dbReference>
<dbReference type="FunFam" id="3.30.1360.40:FF:000003">
    <property type="entry name" value="DNA topoisomerase 2"/>
    <property type="match status" value="1"/>
</dbReference>
<dbReference type="FunFam" id="3.30.1490.30:FF:000001">
    <property type="entry name" value="DNA topoisomerase 2"/>
    <property type="match status" value="1"/>
</dbReference>
<dbReference type="FunFam" id="3.30.230.10:FF:000008">
    <property type="entry name" value="DNA topoisomerase 2"/>
    <property type="match status" value="1"/>
</dbReference>
<dbReference type="FunFam" id="3.30.565.10:FF:000004">
    <property type="entry name" value="DNA topoisomerase 2"/>
    <property type="match status" value="1"/>
</dbReference>
<dbReference type="FunFam" id="3.40.50.670:FF:000001">
    <property type="entry name" value="DNA topoisomerase 2"/>
    <property type="match status" value="2"/>
</dbReference>
<dbReference type="FunFam" id="3.90.199.10:FF:000002">
    <property type="entry name" value="DNA topoisomerase 2"/>
    <property type="match status" value="1"/>
</dbReference>
<dbReference type="Gene3D" id="3.30.1360.40">
    <property type="match status" value="1"/>
</dbReference>
<dbReference type="Gene3D" id="3.30.1490.30">
    <property type="match status" value="1"/>
</dbReference>
<dbReference type="Gene3D" id="3.30.230.10">
    <property type="match status" value="1"/>
</dbReference>
<dbReference type="Gene3D" id="3.40.50.670">
    <property type="match status" value="1"/>
</dbReference>
<dbReference type="Gene3D" id="3.30.565.10">
    <property type="entry name" value="Histidine kinase-like ATPase, C-terminal domain"/>
    <property type="match status" value="1"/>
</dbReference>
<dbReference type="Gene3D" id="3.90.199.10">
    <property type="entry name" value="Topoisomerase II, domain 5"/>
    <property type="match status" value="1"/>
</dbReference>
<dbReference type="Gene3D" id="1.10.268.10">
    <property type="entry name" value="Topoisomerase, domain 3"/>
    <property type="match status" value="1"/>
</dbReference>
<dbReference type="InterPro" id="IPR050634">
    <property type="entry name" value="DNA_Topoisomerase_II"/>
</dbReference>
<dbReference type="InterPro" id="IPR036890">
    <property type="entry name" value="HATPase_C_sf"/>
</dbReference>
<dbReference type="InterPro" id="IPR020568">
    <property type="entry name" value="Ribosomal_Su5_D2-typ_SF"/>
</dbReference>
<dbReference type="InterPro" id="IPR014721">
    <property type="entry name" value="Ribsml_uS5_D2-typ_fold_subgr"/>
</dbReference>
<dbReference type="InterPro" id="IPR001241">
    <property type="entry name" value="Topo_IIA"/>
</dbReference>
<dbReference type="InterPro" id="IPR013760">
    <property type="entry name" value="Topo_IIA-like_dom_sf"/>
</dbReference>
<dbReference type="InterPro" id="IPR013758">
    <property type="entry name" value="Topo_IIA_A/C_ab"/>
</dbReference>
<dbReference type="InterPro" id="IPR013757">
    <property type="entry name" value="Topo_IIA_A_a_sf"/>
</dbReference>
<dbReference type="InterPro" id="IPR013759">
    <property type="entry name" value="Topo_IIA_B_C"/>
</dbReference>
<dbReference type="InterPro" id="IPR013506">
    <property type="entry name" value="Topo_IIA_bsu_dom2"/>
</dbReference>
<dbReference type="InterPro" id="IPR002205">
    <property type="entry name" value="Topo_IIA_dom_A"/>
</dbReference>
<dbReference type="InterPro" id="IPR001154">
    <property type="entry name" value="TopoII_euk"/>
</dbReference>
<dbReference type="InterPro" id="IPR018522">
    <property type="entry name" value="TopoIIA_CS"/>
</dbReference>
<dbReference type="InterPro" id="IPR031660">
    <property type="entry name" value="TOPRIM_C"/>
</dbReference>
<dbReference type="InterPro" id="IPR006171">
    <property type="entry name" value="TOPRIM_dom"/>
</dbReference>
<dbReference type="InterPro" id="IPR034157">
    <property type="entry name" value="TOPRIM_TopoII"/>
</dbReference>
<dbReference type="PANTHER" id="PTHR10169:SF38">
    <property type="entry name" value="DNA TOPOISOMERASE 2"/>
    <property type="match status" value="1"/>
</dbReference>
<dbReference type="PANTHER" id="PTHR10169">
    <property type="entry name" value="DNA TOPOISOMERASE/GYRASE"/>
    <property type="match status" value="1"/>
</dbReference>
<dbReference type="Pfam" id="PF00204">
    <property type="entry name" value="DNA_gyraseB"/>
    <property type="match status" value="1"/>
</dbReference>
<dbReference type="Pfam" id="PF00521">
    <property type="entry name" value="DNA_topoisoIV"/>
    <property type="match status" value="1"/>
</dbReference>
<dbReference type="Pfam" id="PF02518">
    <property type="entry name" value="HATPase_c"/>
    <property type="match status" value="1"/>
</dbReference>
<dbReference type="Pfam" id="PF01751">
    <property type="entry name" value="Toprim"/>
    <property type="match status" value="1"/>
</dbReference>
<dbReference type="Pfam" id="PF16898">
    <property type="entry name" value="TOPRIM_C"/>
    <property type="match status" value="1"/>
</dbReference>
<dbReference type="PRINTS" id="PR01158">
    <property type="entry name" value="TOPISMRASEII"/>
</dbReference>
<dbReference type="PRINTS" id="PR00418">
    <property type="entry name" value="TPI2FAMILY"/>
</dbReference>
<dbReference type="SMART" id="SM00433">
    <property type="entry name" value="TOP2c"/>
    <property type="match status" value="1"/>
</dbReference>
<dbReference type="SMART" id="SM00434">
    <property type="entry name" value="TOP4c"/>
    <property type="match status" value="1"/>
</dbReference>
<dbReference type="SUPFAM" id="SSF55874">
    <property type="entry name" value="ATPase domain of HSP90 chaperone/DNA topoisomerase II/histidine kinase"/>
    <property type="match status" value="1"/>
</dbReference>
<dbReference type="SUPFAM" id="SSF54211">
    <property type="entry name" value="Ribosomal protein S5 domain 2-like"/>
    <property type="match status" value="1"/>
</dbReference>
<dbReference type="SUPFAM" id="SSF56719">
    <property type="entry name" value="Type II DNA topoisomerase"/>
    <property type="match status" value="1"/>
</dbReference>
<dbReference type="PROSITE" id="PS52040">
    <property type="entry name" value="TOPO_IIA"/>
    <property type="match status" value="1"/>
</dbReference>
<dbReference type="PROSITE" id="PS00177">
    <property type="entry name" value="TOPOISOMERASE_II"/>
    <property type="match status" value="1"/>
</dbReference>
<dbReference type="PROSITE" id="PS50880">
    <property type="entry name" value="TOPRIM"/>
    <property type="match status" value="1"/>
</dbReference>
<gene>
    <name type="primary">TOP2</name>
</gene>
<protein>
    <recommendedName>
        <fullName>DNA topoisomerase 2</fullName>
        <ecNumber evidence="3">5.6.2.2</ecNumber>
    </recommendedName>
    <alternativeName>
        <fullName>DNA topoisomerase II</fullName>
        <shortName>TOPOII</shortName>
    </alternativeName>
</protein>